<organism>
    <name type="scientific">Halalkalibacterium halodurans (strain ATCC BAA-125 / DSM 18197 / FERM 7344 / JCM 9153 / C-125)</name>
    <name type="common">Bacillus halodurans</name>
    <dbReference type="NCBI Taxonomy" id="272558"/>
    <lineage>
        <taxon>Bacteria</taxon>
        <taxon>Bacillati</taxon>
        <taxon>Bacillota</taxon>
        <taxon>Bacilli</taxon>
        <taxon>Bacillales</taxon>
        <taxon>Bacillaceae</taxon>
        <taxon>Halalkalibacterium (ex Joshi et al. 2022)</taxon>
    </lineage>
</organism>
<accession>Q9Z9K9</accession>
<accession>Q9JPY1</accession>
<proteinExistence type="inferred from homology"/>
<keyword id="KW-1185">Reference proteome</keyword>
<keyword id="KW-0687">Ribonucleoprotein</keyword>
<keyword id="KW-0689">Ribosomal protein</keyword>
<keyword id="KW-0694">RNA-binding</keyword>
<keyword id="KW-0699">rRNA-binding</keyword>
<name>RL22_HALH5</name>
<comment type="function">
    <text evidence="1">This protein binds specifically to 23S rRNA; its binding is stimulated by other ribosomal proteins, e.g. L4, L17, and L20. It is important during the early stages of 50S assembly. It makes multiple contacts with different domains of the 23S rRNA in the assembled 50S subunit and ribosome (By similarity).</text>
</comment>
<comment type="function">
    <text evidence="1">The globular domain of the protein is located near the polypeptide exit tunnel on the outside of the subunit, while an extended beta-hairpin is found that lines the wall of the exit tunnel in the center of the 70S ribosome.</text>
</comment>
<comment type="subunit">
    <text evidence="1">Part of the 50S ribosomal subunit.</text>
</comment>
<comment type="similarity">
    <text evidence="1">Belongs to the universal ribosomal protein uL22 family.</text>
</comment>
<sequence length="113" mass="12520">MQAKAVAKQVRIAPRKARLVIDLIRGKQVGEAIAILKHTPKAASPIIEKVLNSAIANAEHNYEMEPNNLVISEAFVDEGVTLKRFRPRAMGRASRINKRTSHITIVVTEKKEG</sequence>
<protein>
    <recommendedName>
        <fullName evidence="1">Large ribosomal subunit protein uL22</fullName>
    </recommendedName>
    <alternativeName>
        <fullName evidence="2">50S ribosomal protein L22</fullName>
    </alternativeName>
</protein>
<reference key="1">
    <citation type="journal article" date="1999" name="Biosci. Biotechnol. Biochem.">
        <title>Sequence analysis of a 32-kb region including the major ribosomal protein gene clusters from alkaliphilic Bacillus sp. strain C-125.</title>
        <authorList>
            <person name="Takami H."/>
            <person name="Takaki Y."/>
            <person name="Nakasone K."/>
            <person name="Hirama C."/>
            <person name="Inoue A."/>
            <person name="Horikoshi K."/>
        </authorList>
    </citation>
    <scope>NUCLEOTIDE SEQUENCE [GENOMIC DNA]</scope>
    <source>
        <strain>ATCC BAA-125 / DSM 18197 / FERM 7344 / JCM 9153 / C-125</strain>
    </source>
</reference>
<reference key="2">
    <citation type="journal article" date="2000" name="Nucleic Acids Res.">
        <title>Complete genome sequence of the alkaliphilic bacterium Bacillus halodurans and genomic sequence comparison with Bacillus subtilis.</title>
        <authorList>
            <person name="Takami H."/>
            <person name="Nakasone K."/>
            <person name="Takaki Y."/>
            <person name="Maeno G."/>
            <person name="Sasaki R."/>
            <person name="Masui N."/>
            <person name="Fuji F."/>
            <person name="Hirama C."/>
            <person name="Nakamura Y."/>
            <person name="Ogasawara N."/>
            <person name="Kuhara S."/>
            <person name="Horikoshi K."/>
        </authorList>
    </citation>
    <scope>NUCLEOTIDE SEQUENCE [LARGE SCALE GENOMIC DNA]</scope>
    <source>
        <strain>ATCC BAA-125 / DSM 18197 / FERM 7344 / JCM 9153 / C-125</strain>
    </source>
</reference>
<dbReference type="EMBL" id="AB017508">
    <property type="protein sequence ID" value="BAA75276.1"/>
    <property type="molecule type" value="Genomic_DNA"/>
</dbReference>
<dbReference type="EMBL" id="BA000004">
    <property type="protein sequence ID" value="BAB03858.1"/>
    <property type="molecule type" value="Genomic_DNA"/>
</dbReference>
<dbReference type="PIR" id="T44388">
    <property type="entry name" value="T44388"/>
</dbReference>
<dbReference type="RefSeq" id="WP_010896322.1">
    <property type="nucleotide sequence ID" value="NC_002570.2"/>
</dbReference>
<dbReference type="SMR" id="Q9Z9K9"/>
<dbReference type="STRING" id="272558.gene:10725979"/>
<dbReference type="GeneID" id="87595680"/>
<dbReference type="KEGG" id="bha:BH0139"/>
<dbReference type="eggNOG" id="COG0091">
    <property type="taxonomic scope" value="Bacteria"/>
</dbReference>
<dbReference type="HOGENOM" id="CLU_083987_3_3_9"/>
<dbReference type="OrthoDB" id="9805969at2"/>
<dbReference type="Proteomes" id="UP000001258">
    <property type="component" value="Chromosome"/>
</dbReference>
<dbReference type="GO" id="GO:0022625">
    <property type="term" value="C:cytosolic large ribosomal subunit"/>
    <property type="evidence" value="ECO:0007669"/>
    <property type="project" value="TreeGrafter"/>
</dbReference>
<dbReference type="GO" id="GO:0019843">
    <property type="term" value="F:rRNA binding"/>
    <property type="evidence" value="ECO:0007669"/>
    <property type="project" value="UniProtKB-UniRule"/>
</dbReference>
<dbReference type="GO" id="GO:0003735">
    <property type="term" value="F:structural constituent of ribosome"/>
    <property type="evidence" value="ECO:0007669"/>
    <property type="project" value="InterPro"/>
</dbReference>
<dbReference type="GO" id="GO:0006412">
    <property type="term" value="P:translation"/>
    <property type="evidence" value="ECO:0007669"/>
    <property type="project" value="UniProtKB-UniRule"/>
</dbReference>
<dbReference type="CDD" id="cd00336">
    <property type="entry name" value="Ribosomal_L22"/>
    <property type="match status" value="1"/>
</dbReference>
<dbReference type="FunFam" id="3.90.470.10:FF:000001">
    <property type="entry name" value="50S ribosomal protein L22"/>
    <property type="match status" value="1"/>
</dbReference>
<dbReference type="Gene3D" id="3.90.470.10">
    <property type="entry name" value="Ribosomal protein L22/L17"/>
    <property type="match status" value="1"/>
</dbReference>
<dbReference type="HAMAP" id="MF_01331_B">
    <property type="entry name" value="Ribosomal_uL22_B"/>
    <property type="match status" value="1"/>
</dbReference>
<dbReference type="InterPro" id="IPR001063">
    <property type="entry name" value="Ribosomal_uL22"/>
</dbReference>
<dbReference type="InterPro" id="IPR005727">
    <property type="entry name" value="Ribosomal_uL22_bac/chlpt-type"/>
</dbReference>
<dbReference type="InterPro" id="IPR047867">
    <property type="entry name" value="Ribosomal_uL22_bac/org-type"/>
</dbReference>
<dbReference type="InterPro" id="IPR018260">
    <property type="entry name" value="Ribosomal_uL22_CS"/>
</dbReference>
<dbReference type="InterPro" id="IPR036394">
    <property type="entry name" value="Ribosomal_uL22_sf"/>
</dbReference>
<dbReference type="NCBIfam" id="TIGR01044">
    <property type="entry name" value="rplV_bact"/>
    <property type="match status" value="1"/>
</dbReference>
<dbReference type="PANTHER" id="PTHR13501">
    <property type="entry name" value="CHLOROPLAST 50S RIBOSOMAL PROTEIN L22-RELATED"/>
    <property type="match status" value="1"/>
</dbReference>
<dbReference type="PANTHER" id="PTHR13501:SF8">
    <property type="entry name" value="LARGE RIBOSOMAL SUBUNIT PROTEIN UL22M"/>
    <property type="match status" value="1"/>
</dbReference>
<dbReference type="Pfam" id="PF00237">
    <property type="entry name" value="Ribosomal_L22"/>
    <property type="match status" value="1"/>
</dbReference>
<dbReference type="SUPFAM" id="SSF54843">
    <property type="entry name" value="Ribosomal protein L22"/>
    <property type="match status" value="1"/>
</dbReference>
<dbReference type="PROSITE" id="PS00464">
    <property type="entry name" value="RIBOSOMAL_L22"/>
    <property type="match status" value="1"/>
</dbReference>
<feature type="chain" id="PRO_0000125117" description="Large ribosomal subunit protein uL22">
    <location>
        <begin position="1"/>
        <end position="113"/>
    </location>
</feature>
<gene>
    <name evidence="1" type="primary">rplV</name>
    <name type="ordered locus">BH0139</name>
</gene>
<evidence type="ECO:0000255" key="1">
    <source>
        <dbReference type="HAMAP-Rule" id="MF_01331"/>
    </source>
</evidence>
<evidence type="ECO:0000305" key="2"/>